<comment type="function">
    <text evidence="1">Has nucleoside phosphatase activity towards nucleoside triphosphates and nucleoside diphosphates.</text>
</comment>
<comment type="catalytic activity">
    <reaction evidence="1">
        <text>a ribonucleoside 5'-triphosphate + H2O = a ribonucleoside 5'-diphosphate + phosphate + H(+)</text>
        <dbReference type="Rhea" id="RHEA:23680"/>
        <dbReference type="ChEBI" id="CHEBI:15377"/>
        <dbReference type="ChEBI" id="CHEBI:15378"/>
        <dbReference type="ChEBI" id="CHEBI:43474"/>
        <dbReference type="ChEBI" id="CHEBI:57930"/>
        <dbReference type="ChEBI" id="CHEBI:61557"/>
        <dbReference type="EC" id="3.6.1.15"/>
    </reaction>
</comment>
<comment type="catalytic activity">
    <reaction evidence="1">
        <text>a ribonucleoside 5'-diphosphate + H2O = a ribonucleoside 5'-phosphate + phosphate + H(+)</text>
        <dbReference type="Rhea" id="RHEA:36799"/>
        <dbReference type="ChEBI" id="CHEBI:15377"/>
        <dbReference type="ChEBI" id="CHEBI:15378"/>
        <dbReference type="ChEBI" id="CHEBI:43474"/>
        <dbReference type="ChEBI" id="CHEBI:57930"/>
        <dbReference type="ChEBI" id="CHEBI:58043"/>
        <dbReference type="EC" id="3.6.1.6"/>
    </reaction>
</comment>
<comment type="cofactor">
    <cofactor evidence="1">
        <name>Mg(2+)</name>
        <dbReference type="ChEBI" id="CHEBI:18420"/>
    </cofactor>
</comment>
<comment type="similarity">
    <text evidence="1">Belongs to the Ntdp family.</text>
</comment>
<comment type="sequence caution" evidence="2">
    <conflict type="erroneous initiation">
        <sequence resource="EMBL-CDS" id="AAT87502"/>
    </conflict>
</comment>
<protein>
    <recommendedName>
        <fullName evidence="1">Nucleoside triphosphate/diphosphate phosphatase</fullName>
        <ecNumber evidence="1">3.6.1.15</ecNumber>
        <ecNumber evidence="1">3.6.1.6</ecNumber>
    </recommendedName>
</protein>
<dbReference type="EC" id="3.6.1.15" evidence="1"/>
<dbReference type="EC" id="3.6.1.6" evidence="1"/>
<dbReference type="EMBL" id="CP000003">
    <property type="protein sequence ID" value="AAT87502.1"/>
    <property type="status" value="ALT_INIT"/>
    <property type="molecule type" value="Genomic_DNA"/>
</dbReference>
<dbReference type="RefSeq" id="WP_002983693.1">
    <property type="nucleotide sequence ID" value="NC_006086.1"/>
</dbReference>
<dbReference type="SMR" id="Q5XAR1"/>
<dbReference type="KEGG" id="spa:M6_Spy1367"/>
<dbReference type="HOGENOM" id="CLU_109787_1_0_9"/>
<dbReference type="Proteomes" id="UP000001167">
    <property type="component" value="Chromosome"/>
</dbReference>
<dbReference type="GO" id="GO:0000287">
    <property type="term" value="F:magnesium ion binding"/>
    <property type="evidence" value="ECO:0007669"/>
    <property type="project" value="UniProtKB-UniRule"/>
</dbReference>
<dbReference type="GO" id="GO:0017110">
    <property type="term" value="F:nucleoside diphosphate phosphatase activity"/>
    <property type="evidence" value="ECO:0007669"/>
    <property type="project" value="UniProtKB-UniRule"/>
</dbReference>
<dbReference type="GO" id="GO:0017111">
    <property type="term" value="F:ribonucleoside triphosphate phosphatase activity"/>
    <property type="evidence" value="ECO:0007669"/>
    <property type="project" value="UniProtKB-UniRule"/>
</dbReference>
<dbReference type="Gene3D" id="2.40.380.10">
    <property type="entry name" value="FomD-like"/>
    <property type="match status" value="1"/>
</dbReference>
<dbReference type="HAMAP" id="MF_01568">
    <property type="entry name" value="Ntdp"/>
    <property type="match status" value="1"/>
</dbReference>
<dbReference type="InterPro" id="IPR007295">
    <property type="entry name" value="DUF402"/>
</dbReference>
<dbReference type="InterPro" id="IPR035930">
    <property type="entry name" value="FomD-like_sf"/>
</dbReference>
<dbReference type="InterPro" id="IPR050212">
    <property type="entry name" value="Ntdp-like"/>
</dbReference>
<dbReference type="InterPro" id="IPR016882">
    <property type="entry name" value="SA1684"/>
</dbReference>
<dbReference type="NCBIfam" id="NF010183">
    <property type="entry name" value="PRK13662.1"/>
    <property type="match status" value="1"/>
</dbReference>
<dbReference type="PANTHER" id="PTHR39159">
    <property type="match status" value="1"/>
</dbReference>
<dbReference type="PANTHER" id="PTHR39159:SF1">
    <property type="entry name" value="UPF0374 PROTEIN YGAC"/>
    <property type="match status" value="1"/>
</dbReference>
<dbReference type="Pfam" id="PF04167">
    <property type="entry name" value="DUF402"/>
    <property type="match status" value="1"/>
</dbReference>
<dbReference type="PIRSF" id="PIRSF028345">
    <property type="entry name" value="UCP028345"/>
    <property type="match status" value="1"/>
</dbReference>
<dbReference type="SUPFAM" id="SSF159234">
    <property type="entry name" value="FomD-like"/>
    <property type="match status" value="1"/>
</dbReference>
<name>NTDP_STRP6</name>
<sequence>MKLPKEGDFITIQSYKHDGSLHRTWRDTMVLKTTENALIGVNDHTLVTESDGRRWVTREPAIVYFHKKYWFNIIAMIRDNGVSYYCNLASPYMMDTEALKYIDYDLDVKVFADGEKRLLDVDEYEIHKKEMQYSADMDFILKENVKILVDWINHEKGPFSKAYITIWYKRYLELKNR</sequence>
<gene>
    <name type="ordered locus">M6_Spy1367</name>
</gene>
<evidence type="ECO:0000255" key="1">
    <source>
        <dbReference type="HAMAP-Rule" id="MF_01568"/>
    </source>
</evidence>
<evidence type="ECO:0000305" key="2"/>
<reference key="1">
    <citation type="journal article" date="2004" name="J. Infect. Dis.">
        <title>Progress toward characterization of the group A Streptococcus metagenome: complete genome sequence of a macrolide-resistant serotype M6 strain.</title>
        <authorList>
            <person name="Banks D.J."/>
            <person name="Porcella S.F."/>
            <person name="Barbian K.D."/>
            <person name="Beres S.B."/>
            <person name="Philips L.E."/>
            <person name="Voyich J.M."/>
            <person name="DeLeo F.R."/>
            <person name="Martin J.M."/>
            <person name="Somerville G.A."/>
            <person name="Musser J.M."/>
        </authorList>
    </citation>
    <scope>NUCLEOTIDE SEQUENCE [LARGE SCALE GENOMIC DNA]</scope>
    <source>
        <strain>ATCC BAA-946 / MGAS10394</strain>
    </source>
</reference>
<accession>Q5XAR1</accession>
<keyword id="KW-0378">Hydrolase</keyword>
<keyword id="KW-0460">Magnesium</keyword>
<keyword id="KW-0479">Metal-binding</keyword>
<feature type="chain" id="PRO_0000248123" description="Nucleoside triphosphate/diphosphate phosphatase">
    <location>
        <begin position="1"/>
        <end position="177"/>
    </location>
</feature>
<feature type="active site" description="Proton donor" evidence="1">
    <location>
        <position position="23"/>
    </location>
</feature>
<feature type="binding site" evidence="1">
    <location>
        <position position="87"/>
    </location>
    <ligand>
        <name>Mg(2+)</name>
        <dbReference type="ChEBI" id="CHEBI:18420"/>
        <label>1</label>
    </ligand>
</feature>
<feature type="binding site" evidence="1">
    <location>
        <position position="103"/>
    </location>
    <ligand>
        <name>Mg(2+)</name>
        <dbReference type="ChEBI" id="CHEBI:18420"/>
        <label>1</label>
    </ligand>
</feature>
<feature type="binding site" evidence="1">
    <location>
        <position position="105"/>
    </location>
    <ligand>
        <name>Mg(2+)</name>
        <dbReference type="ChEBI" id="CHEBI:18420"/>
        <label>2</label>
    </ligand>
</feature>
<feature type="binding site" evidence="1">
    <location>
        <position position="107"/>
    </location>
    <ligand>
        <name>Mg(2+)</name>
        <dbReference type="ChEBI" id="CHEBI:18420"/>
        <label>1</label>
    </ligand>
</feature>
<feature type="binding site" evidence="1">
    <location>
        <position position="107"/>
    </location>
    <ligand>
        <name>Mg(2+)</name>
        <dbReference type="ChEBI" id="CHEBI:18420"/>
        <label>2</label>
    </ligand>
</feature>
<feature type="binding site" evidence="1">
    <location>
        <position position="120"/>
    </location>
    <ligand>
        <name>Mg(2+)</name>
        <dbReference type="ChEBI" id="CHEBI:18420"/>
        <label>2</label>
    </ligand>
</feature>
<feature type="binding site" evidence="1">
    <location>
        <position position="123"/>
    </location>
    <ligand>
        <name>Mg(2+)</name>
        <dbReference type="ChEBI" id="CHEBI:18420"/>
        <label>2</label>
    </ligand>
</feature>
<organism>
    <name type="scientific">Streptococcus pyogenes serotype M6 (strain ATCC BAA-946 / MGAS10394)</name>
    <dbReference type="NCBI Taxonomy" id="286636"/>
    <lineage>
        <taxon>Bacteria</taxon>
        <taxon>Bacillati</taxon>
        <taxon>Bacillota</taxon>
        <taxon>Bacilli</taxon>
        <taxon>Lactobacillales</taxon>
        <taxon>Streptococcaceae</taxon>
        <taxon>Streptococcus</taxon>
    </lineage>
</organism>
<proteinExistence type="inferred from homology"/>